<protein>
    <recommendedName>
        <fullName evidence="1">Elongation factor P</fullName>
        <shortName evidence="1">EF-P</shortName>
    </recommendedName>
</protein>
<evidence type="ECO:0000255" key="1">
    <source>
        <dbReference type="HAMAP-Rule" id="MF_00141"/>
    </source>
</evidence>
<gene>
    <name evidence="1" type="primary">efp</name>
    <name type="ordered locus">TM1040_1987</name>
</gene>
<accession>Q1GF47</accession>
<name>EFP_RUEST</name>
<dbReference type="EMBL" id="CP000377">
    <property type="protein sequence ID" value="ABF64719.1"/>
    <property type="molecule type" value="Genomic_DNA"/>
</dbReference>
<dbReference type="RefSeq" id="WP_011539312.1">
    <property type="nucleotide sequence ID" value="NC_008044.1"/>
</dbReference>
<dbReference type="SMR" id="Q1GF47"/>
<dbReference type="STRING" id="292414.TM1040_1987"/>
<dbReference type="KEGG" id="sit:TM1040_1987"/>
<dbReference type="eggNOG" id="COG0231">
    <property type="taxonomic scope" value="Bacteria"/>
</dbReference>
<dbReference type="HOGENOM" id="CLU_074944_1_1_5"/>
<dbReference type="OrthoDB" id="9801844at2"/>
<dbReference type="UniPathway" id="UPA00345"/>
<dbReference type="Proteomes" id="UP000000636">
    <property type="component" value="Chromosome"/>
</dbReference>
<dbReference type="GO" id="GO:0005737">
    <property type="term" value="C:cytoplasm"/>
    <property type="evidence" value="ECO:0007669"/>
    <property type="project" value="UniProtKB-SubCell"/>
</dbReference>
<dbReference type="GO" id="GO:0003746">
    <property type="term" value="F:translation elongation factor activity"/>
    <property type="evidence" value="ECO:0007669"/>
    <property type="project" value="UniProtKB-UniRule"/>
</dbReference>
<dbReference type="GO" id="GO:0043043">
    <property type="term" value="P:peptide biosynthetic process"/>
    <property type="evidence" value="ECO:0007669"/>
    <property type="project" value="InterPro"/>
</dbReference>
<dbReference type="CDD" id="cd04470">
    <property type="entry name" value="S1_EF-P_repeat_1"/>
    <property type="match status" value="1"/>
</dbReference>
<dbReference type="CDD" id="cd05794">
    <property type="entry name" value="S1_EF-P_repeat_2"/>
    <property type="match status" value="1"/>
</dbReference>
<dbReference type="FunFam" id="2.30.30.30:FF:000003">
    <property type="entry name" value="Elongation factor P"/>
    <property type="match status" value="1"/>
</dbReference>
<dbReference type="FunFam" id="2.40.50.140:FF:000004">
    <property type="entry name" value="Elongation factor P"/>
    <property type="match status" value="1"/>
</dbReference>
<dbReference type="FunFam" id="2.40.50.140:FF:000009">
    <property type="entry name" value="Elongation factor P"/>
    <property type="match status" value="1"/>
</dbReference>
<dbReference type="Gene3D" id="2.30.30.30">
    <property type="match status" value="1"/>
</dbReference>
<dbReference type="Gene3D" id="2.40.50.140">
    <property type="entry name" value="Nucleic acid-binding proteins"/>
    <property type="match status" value="2"/>
</dbReference>
<dbReference type="HAMAP" id="MF_00141">
    <property type="entry name" value="EF_P"/>
    <property type="match status" value="1"/>
</dbReference>
<dbReference type="InterPro" id="IPR015365">
    <property type="entry name" value="Elong-fact-P_C"/>
</dbReference>
<dbReference type="InterPro" id="IPR012340">
    <property type="entry name" value="NA-bd_OB-fold"/>
</dbReference>
<dbReference type="InterPro" id="IPR014722">
    <property type="entry name" value="Rib_uL2_dom2"/>
</dbReference>
<dbReference type="InterPro" id="IPR020599">
    <property type="entry name" value="Transl_elong_fac_P/YeiP"/>
</dbReference>
<dbReference type="InterPro" id="IPR013185">
    <property type="entry name" value="Transl_elong_KOW-like"/>
</dbReference>
<dbReference type="InterPro" id="IPR001059">
    <property type="entry name" value="Transl_elong_P/YeiP_cen"/>
</dbReference>
<dbReference type="InterPro" id="IPR013852">
    <property type="entry name" value="Transl_elong_P/YeiP_CS"/>
</dbReference>
<dbReference type="InterPro" id="IPR011768">
    <property type="entry name" value="Transl_elongation_fac_P"/>
</dbReference>
<dbReference type="InterPro" id="IPR008991">
    <property type="entry name" value="Translation_prot_SH3-like_sf"/>
</dbReference>
<dbReference type="NCBIfam" id="TIGR00038">
    <property type="entry name" value="efp"/>
    <property type="match status" value="1"/>
</dbReference>
<dbReference type="NCBIfam" id="NF001810">
    <property type="entry name" value="PRK00529.1"/>
    <property type="match status" value="1"/>
</dbReference>
<dbReference type="PANTHER" id="PTHR30053">
    <property type="entry name" value="ELONGATION FACTOR P"/>
    <property type="match status" value="1"/>
</dbReference>
<dbReference type="PANTHER" id="PTHR30053:SF14">
    <property type="entry name" value="TRANSLATION ELONGATION FACTOR KOW-LIKE DOMAIN-CONTAINING PROTEIN"/>
    <property type="match status" value="1"/>
</dbReference>
<dbReference type="Pfam" id="PF01132">
    <property type="entry name" value="EFP"/>
    <property type="match status" value="1"/>
</dbReference>
<dbReference type="Pfam" id="PF08207">
    <property type="entry name" value="EFP_N"/>
    <property type="match status" value="1"/>
</dbReference>
<dbReference type="Pfam" id="PF09285">
    <property type="entry name" value="Elong-fact-P_C"/>
    <property type="match status" value="1"/>
</dbReference>
<dbReference type="PIRSF" id="PIRSF005901">
    <property type="entry name" value="EF-P"/>
    <property type="match status" value="1"/>
</dbReference>
<dbReference type="SMART" id="SM01185">
    <property type="entry name" value="EFP"/>
    <property type="match status" value="1"/>
</dbReference>
<dbReference type="SMART" id="SM00841">
    <property type="entry name" value="Elong-fact-P_C"/>
    <property type="match status" value="1"/>
</dbReference>
<dbReference type="SUPFAM" id="SSF50249">
    <property type="entry name" value="Nucleic acid-binding proteins"/>
    <property type="match status" value="2"/>
</dbReference>
<dbReference type="SUPFAM" id="SSF50104">
    <property type="entry name" value="Translation proteins SH3-like domain"/>
    <property type="match status" value="1"/>
</dbReference>
<dbReference type="PROSITE" id="PS01275">
    <property type="entry name" value="EFP"/>
    <property type="match status" value="1"/>
</dbReference>
<proteinExistence type="inferred from homology"/>
<comment type="function">
    <text evidence="1">Involved in peptide bond synthesis. Stimulates efficient translation and peptide-bond synthesis on native or reconstituted 70S ribosomes in vitro. Probably functions indirectly by altering the affinity of the ribosome for aminoacyl-tRNA, thus increasing their reactivity as acceptors for peptidyl transferase.</text>
</comment>
<comment type="pathway">
    <text evidence="1">Protein biosynthesis; polypeptide chain elongation.</text>
</comment>
<comment type="subcellular location">
    <subcellularLocation>
        <location evidence="1">Cytoplasm</location>
    </subcellularLocation>
</comment>
<comment type="similarity">
    <text evidence="1">Belongs to the elongation factor P family.</text>
</comment>
<sequence length="187" mass="20974">MPKINGNEIRPGNVLEHNGGLWAAVKVDHVKPGKGGAFAQVEMKNLRNGSKLNERFRSADKVERVRLEQKDQQFLYETDGMLVFMDTETYEQIELPADLLGDRRPFLQDGMTIVVEFYESEALNATVPQKVTCKIVETEPVVKGQTAANSFKPAILDNGVKVMVPPFVGQDEMIIVNTETMEYSERA</sequence>
<reference key="1">
    <citation type="submission" date="2006-05" db="EMBL/GenBank/DDBJ databases">
        <title>Complete sequence of chromosome of Silicibacter sp. TM1040.</title>
        <authorList>
            <consortium name="US DOE Joint Genome Institute"/>
            <person name="Copeland A."/>
            <person name="Lucas S."/>
            <person name="Lapidus A."/>
            <person name="Barry K."/>
            <person name="Detter J.C."/>
            <person name="Glavina del Rio T."/>
            <person name="Hammon N."/>
            <person name="Israni S."/>
            <person name="Dalin E."/>
            <person name="Tice H."/>
            <person name="Pitluck S."/>
            <person name="Brettin T."/>
            <person name="Bruce D."/>
            <person name="Han C."/>
            <person name="Tapia R."/>
            <person name="Goodwin L."/>
            <person name="Thompson L.S."/>
            <person name="Gilna P."/>
            <person name="Schmutz J."/>
            <person name="Larimer F."/>
            <person name="Land M."/>
            <person name="Hauser L."/>
            <person name="Kyrpides N."/>
            <person name="Kim E."/>
            <person name="Belas R."/>
            <person name="Moran M.A."/>
            <person name="Buchan A."/>
            <person name="Gonzalez J.M."/>
            <person name="Schell M.A."/>
            <person name="Sun F."/>
            <person name="Richardson P."/>
        </authorList>
    </citation>
    <scope>NUCLEOTIDE SEQUENCE [LARGE SCALE GENOMIC DNA]</scope>
    <source>
        <strain>TM1040</strain>
    </source>
</reference>
<organism>
    <name type="scientific">Ruegeria sp. (strain TM1040)</name>
    <name type="common">Silicibacter sp.</name>
    <dbReference type="NCBI Taxonomy" id="292414"/>
    <lineage>
        <taxon>Bacteria</taxon>
        <taxon>Pseudomonadati</taxon>
        <taxon>Pseudomonadota</taxon>
        <taxon>Alphaproteobacteria</taxon>
        <taxon>Rhodobacterales</taxon>
        <taxon>Roseobacteraceae</taxon>
        <taxon>Ruegeria</taxon>
    </lineage>
</organism>
<feature type="chain" id="PRO_1000010859" description="Elongation factor P">
    <location>
        <begin position="1"/>
        <end position="187"/>
    </location>
</feature>
<keyword id="KW-0963">Cytoplasm</keyword>
<keyword id="KW-0251">Elongation factor</keyword>
<keyword id="KW-0648">Protein biosynthesis</keyword>
<keyword id="KW-1185">Reference proteome</keyword>